<sequence length="218" mass="22944">MSLGLIGRKVGMTRLFTDEGEAIPVTVIDVSDNRVAQIKTQATNGYDAIQLAHGTRRATRVTKAMAGHFAKAGVMAGNALNEFHLDAAKIAEMTPGQVIPAETAFTAGQKVDVQGVTIGKGYAGTIKRYHFASGRASHGNSRSHNVPGSIGMAQDPGRVFPGKRMTGHLGDITRTVQNLVIARIDAERNLIMVKGAIPGAPGGKVIVTPAVKTPLKKK</sequence>
<dbReference type="EMBL" id="CP001010">
    <property type="protein sequence ID" value="ACB43378.1"/>
    <property type="molecule type" value="Genomic_DNA"/>
</dbReference>
<dbReference type="SMR" id="B1XSQ1"/>
<dbReference type="STRING" id="452638.Pnec_0050"/>
<dbReference type="KEGG" id="pne:Pnec_0050"/>
<dbReference type="eggNOG" id="COG0087">
    <property type="taxonomic scope" value="Bacteria"/>
</dbReference>
<dbReference type="HOGENOM" id="CLU_044142_4_1_4"/>
<dbReference type="OrthoDB" id="9806135at2"/>
<dbReference type="GO" id="GO:0022625">
    <property type="term" value="C:cytosolic large ribosomal subunit"/>
    <property type="evidence" value="ECO:0007669"/>
    <property type="project" value="TreeGrafter"/>
</dbReference>
<dbReference type="GO" id="GO:0019843">
    <property type="term" value="F:rRNA binding"/>
    <property type="evidence" value="ECO:0007669"/>
    <property type="project" value="UniProtKB-UniRule"/>
</dbReference>
<dbReference type="GO" id="GO:0003735">
    <property type="term" value="F:structural constituent of ribosome"/>
    <property type="evidence" value="ECO:0007669"/>
    <property type="project" value="InterPro"/>
</dbReference>
<dbReference type="GO" id="GO:0006412">
    <property type="term" value="P:translation"/>
    <property type="evidence" value="ECO:0007669"/>
    <property type="project" value="UniProtKB-UniRule"/>
</dbReference>
<dbReference type="FunFam" id="2.40.30.10:FF:000004">
    <property type="entry name" value="50S ribosomal protein L3"/>
    <property type="match status" value="1"/>
</dbReference>
<dbReference type="FunFam" id="3.30.160.810:FF:000001">
    <property type="entry name" value="50S ribosomal protein L3"/>
    <property type="match status" value="1"/>
</dbReference>
<dbReference type="Gene3D" id="3.30.160.810">
    <property type="match status" value="1"/>
</dbReference>
<dbReference type="Gene3D" id="2.40.30.10">
    <property type="entry name" value="Translation factors"/>
    <property type="match status" value="1"/>
</dbReference>
<dbReference type="HAMAP" id="MF_01325_B">
    <property type="entry name" value="Ribosomal_uL3_B"/>
    <property type="match status" value="1"/>
</dbReference>
<dbReference type="InterPro" id="IPR000597">
    <property type="entry name" value="Ribosomal_uL3"/>
</dbReference>
<dbReference type="InterPro" id="IPR019927">
    <property type="entry name" value="Ribosomal_uL3_bac/org-type"/>
</dbReference>
<dbReference type="InterPro" id="IPR019926">
    <property type="entry name" value="Ribosomal_uL3_CS"/>
</dbReference>
<dbReference type="InterPro" id="IPR009000">
    <property type="entry name" value="Transl_B-barrel_sf"/>
</dbReference>
<dbReference type="NCBIfam" id="TIGR03625">
    <property type="entry name" value="L3_bact"/>
    <property type="match status" value="1"/>
</dbReference>
<dbReference type="PANTHER" id="PTHR11229">
    <property type="entry name" value="50S RIBOSOMAL PROTEIN L3"/>
    <property type="match status" value="1"/>
</dbReference>
<dbReference type="PANTHER" id="PTHR11229:SF16">
    <property type="entry name" value="LARGE RIBOSOMAL SUBUNIT PROTEIN UL3C"/>
    <property type="match status" value="1"/>
</dbReference>
<dbReference type="Pfam" id="PF00297">
    <property type="entry name" value="Ribosomal_L3"/>
    <property type="match status" value="1"/>
</dbReference>
<dbReference type="SUPFAM" id="SSF50447">
    <property type="entry name" value="Translation proteins"/>
    <property type="match status" value="1"/>
</dbReference>
<dbReference type="PROSITE" id="PS00474">
    <property type="entry name" value="RIBOSOMAL_L3"/>
    <property type="match status" value="1"/>
</dbReference>
<keyword id="KW-0488">Methylation</keyword>
<keyword id="KW-0687">Ribonucleoprotein</keyword>
<keyword id="KW-0689">Ribosomal protein</keyword>
<keyword id="KW-0694">RNA-binding</keyword>
<keyword id="KW-0699">rRNA-binding</keyword>
<organism>
    <name type="scientific">Polynucleobacter necessarius subsp. necessarius (strain STIR1)</name>
    <dbReference type="NCBI Taxonomy" id="452638"/>
    <lineage>
        <taxon>Bacteria</taxon>
        <taxon>Pseudomonadati</taxon>
        <taxon>Pseudomonadota</taxon>
        <taxon>Betaproteobacteria</taxon>
        <taxon>Burkholderiales</taxon>
        <taxon>Burkholderiaceae</taxon>
        <taxon>Polynucleobacter</taxon>
    </lineage>
</organism>
<comment type="function">
    <text evidence="1">One of the primary rRNA binding proteins, it binds directly near the 3'-end of the 23S rRNA, where it nucleates assembly of the 50S subunit.</text>
</comment>
<comment type="subunit">
    <text evidence="1">Part of the 50S ribosomal subunit. Forms a cluster with proteins L14 and L19.</text>
</comment>
<comment type="PTM">
    <text evidence="1">Methylated by PrmB.</text>
</comment>
<comment type="similarity">
    <text evidence="1">Belongs to the universal ribosomal protein uL3 family.</text>
</comment>
<evidence type="ECO:0000255" key="1">
    <source>
        <dbReference type="HAMAP-Rule" id="MF_01325"/>
    </source>
</evidence>
<evidence type="ECO:0000256" key="2">
    <source>
        <dbReference type="SAM" id="MobiDB-lite"/>
    </source>
</evidence>
<evidence type="ECO:0000305" key="3"/>
<feature type="chain" id="PRO_1000141899" description="Large ribosomal subunit protein uL3">
    <location>
        <begin position="1"/>
        <end position="218"/>
    </location>
</feature>
<feature type="region of interest" description="Disordered" evidence="2">
    <location>
        <begin position="134"/>
        <end position="154"/>
    </location>
</feature>
<feature type="modified residue" description="N5-methylglutamine" evidence="1">
    <location>
        <position position="154"/>
    </location>
</feature>
<name>RL3_POLNS</name>
<proteinExistence type="inferred from homology"/>
<accession>B1XSQ1</accession>
<protein>
    <recommendedName>
        <fullName evidence="1">Large ribosomal subunit protein uL3</fullName>
    </recommendedName>
    <alternativeName>
        <fullName evidence="3">50S ribosomal protein L3</fullName>
    </alternativeName>
</protein>
<reference key="1">
    <citation type="journal article" date="2013" name="Proc. Natl. Acad. Sci. U.S.A.">
        <title>Polynucleobacter necessarius, a model for genome reduction in both free-living and symbiotic bacteria.</title>
        <authorList>
            <person name="Boscaro V."/>
            <person name="Felletti M."/>
            <person name="Vannini C."/>
            <person name="Ackerman M.S."/>
            <person name="Chain P.S."/>
            <person name="Malfatti S."/>
            <person name="Vergez L.M."/>
            <person name="Shin M."/>
            <person name="Doak T.G."/>
            <person name="Lynch M."/>
            <person name="Petroni G."/>
        </authorList>
    </citation>
    <scope>NUCLEOTIDE SEQUENCE [LARGE SCALE GENOMIC DNA]</scope>
    <source>
        <strain>STIR1</strain>
    </source>
</reference>
<gene>
    <name evidence="1" type="primary">rplC</name>
    <name type="ordered locus">Pnec_0050</name>
</gene>